<organism>
    <name type="scientific">Candida albicans (strain SC5314 / ATCC MYA-2876)</name>
    <name type="common">Yeast</name>
    <dbReference type="NCBI Taxonomy" id="237561"/>
    <lineage>
        <taxon>Eukaryota</taxon>
        <taxon>Fungi</taxon>
        <taxon>Dikarya</taxon>
        <taxon>Ascomycota</taxon>
        <taxon>Saccharomycotina</taxon>
        <taxon>Pichiomycetes</taxon>
        <taxon>Debaryomycetaceae</taxon>
        <taxon>Candida/Lodderomyces clade</taxon>
        <taxon>Candida</taxon>
    </lineage>
</organism>
<reference key="1">
    <citation type="journal article" date="2004" name="Proc. Natl. Acad. Sci. U.S.A.">
        <title>The diploid genome sequence of Candida albicans.</title>
        <authorList>
            <person name="Jones T."/>
            <person name="Federspiel N.A."/>
            <person name="Chibana H."/>
            <person name="Dungan J."/>
            <person name="Kalman S."/>
            <person name="Magee B.B."/>
            <person name="Newport G."/>
            <person name="Thorstenson Y.R."/>
            <person name="Agabian N."/>
            <person name="Magee P.T."/>
            <person name="Davis R.W."/>
            <person name="Scherer S."/>
        </authorList>
    </citation>
    <scope>NUCLEOTIDE SEQUENCE [LARGE SCALE GENOMIC DNA]</scope>
    <source>
        <strain>SC5314 / ATCC MYA-2876</strain>
    </source>
</reference>
<reference key="2">
    <citation type="journal article" date="2007" name="Genome Biol.">
        <title>Assembly of the Candida albicans genome into sixteen supercontigs aligned on the eight chromosomes.</title>
        <authorList>
            <person name="van het Hoog M."/>
            <person name="Rast T.J."/>
            <person name="Martchenko M."/>
            <person name="Grindle S."/>
            <person name="Dignard D."/>
            <person name="Hogues H."/>
            <person name="Cuomo C."/>
            <person name="Berriman M."/>
            <person name="Scherer S."/>
            <person name="Magee B.B."/>
            <person name="Whiteway M."/>
            <person name="Chibana H."/>
            <person name="Nantel A."/>
            <person name="Magee P.T."/>
        </authorList>
    </citation>
    <scope>GENOME REANNOTATION</scope>
    <source>
        <strain>SC5314 / ATCC MYA-2876</strain>
    </source>
</reference>
<reference key="3">
    <citation type="journal article" date="2013" name="Genome Biol.">
        <title>Assembly of a phased diploid Candida albicans genome facilitates allele-specific measurements and provides a simple model for repeat and indel structure.</title>
        <authorList>
            <person name="Muzzey D."/>
            <person name="Schwartz K."/>
            <person name="Weissman J.S."/>
            <person name="Sherlock G."/>
        </authorList>
    </citation>
    <scope>NUCLEOTIDE SEQUENCE [LARGE SCALE GENOMIC DNA]</scope>
    <scope>GENOME REANNOTATION</scope>
    <source>
        <strain>SC5314 / ATCC MYA-2876</strain>
    </source>
</reference>
<reference key="4">
    <citation type="journal article" date="2001" name="J. Biol. Chem.">
        <title>DNA array studies demonstrate convergent regulation of virulence factors by Cph1, Cph2, and Efg1 in Candida albicans.</title>
        <authorList>
            <person name="Lane S."/>
            <person name="Birse C."/>
            <person name="Zhou S."/>
            <person name="Matson R."/>
            <person name="Liu H."/>
        </authorList>
    </citation>
    <scope>FUNCTION</scope>
    <scope>DISRUPTION PHENOTYPE</scope>
</reference>
<reference key="5">
    <citation type="journal article" date="2001" name="Mol. Cell. Biol.">
        <title>The basic helix-loop-helix transcription factor Cph2 regulates hyphal development in Candida albicans partly via TEC1.</title>
        <authorList>
            <person name="Lane S."/>
            <person name="Zhou S."/>
            <person name="Pan T."/>
            <person name="Dai Q."/>
            <person name="Liu H."/>
        </authorList>
    </citation>
    <scope>FUNCTION</scope>
    <scope>DISRUPTION PHENOTYPE</scope>
    <scope>DNA-BINDING</scope>
</reference>
<reference key="6">
    <citation type="journal article" date="2003" name="Mol. Microbiol.">
        <title>A screen in Saccharomyces cerevisiae identified CaMCM1, an essential gene in Candida albicans crucial for morphogenesis.</title>
        <authorList>
            <person name="Rottmann M."/>
            <person name="Dieter S."/>
            <person name="Brunner H."/>
            <person name="Rupp S."/>
        </authorList>
    </citation>
    <scope>FUNCTION</scope>
</reference>
<reference key="7">
    <citation type="journal article" date="2005" name="Acta Biochim. Biophys. Sin.">
        <title>cDNA array analysis of the differential expression change in virulence-related genes during the development of resistance in Candida albicans.</title>
        <authorList>
            <person name="Xu Z."/>
            <person name="Cao Y.B."/>
            <person name="Zhang J.D."/>
            <person name="Cao Y.Y."/>
            <person name="Gao P.H."/>
            <person name="Wang D.J."/>
            <person name="Fu X.P."/>
            <person name="Ying K."/>
            <person name="Chen W.S."/>
            <person name="Jiang Y.Y."/>
        </authorList>
    </citation>
    <scope>FUNCTION</scope>
    <scope>INDUCTION</scope>
</reference>
<reference key="8">
    <citation type="journal article" date="2005" name="J. Antimicrob. Chemother.">
        <title>Exposure of Candida albicans to antifungal agents affects expression of SAP2 and SAP9 secreted proteinase genes.</title>
        <authorList>
            <person name="Copping V.M.S."/>
            <person name="Barelle C.J."/>
            <person name="Hube B."/>
            <person name="Gow N.A.R."/>
            <person name="Brown A.J.P."/>
            <person name="Odds F.C."/>
        </authorList>
    </citation>
    <scope>INDUCTION</scope>
</reference>
<reference key="9">
    <citation type="journal article" date="2010" name="Eukaryot. Cell">
        <title>Adaptations of Candida albicans for growth in the mammalian intestinal tract.</title>
        <authorList>
            <person name="Rosenbach A."/>
            <person name="Dignard D."/>
            <person name="Pierce J.V."/>
            <person name="Whiteway M."/>
            <person name="Kumamoto C.A."/>
        </authorList>
    </citation>
    <scope>FUNCTION</scope>
    <scope>INDUCTION</scope>
</reference>
<reference key="10">
    <citation type="journal article" date="2011" name="Eukaryot. Cell">
        <title>Conjugated linoleic acid inhibits hyphal growth in Candida albicans by modulating Ras1p cellular levels and downregulating TEC1 expression.</title>
        <authorList>
            <person name="Shareck J."/>
            <person name="Nantel A."/>
            <person name="Belhumeur P."/>
        </authorList>
    </citation>
    <scope>INDUCTION</scope>
</reference>
<reference key="11">
    <citation type="journal article" date="2011" name="PLoS ONE">
        <title>From attachment to damage: defined genes of Candida albicans mediate adhesion, invasion and damage during interaction with oral epithelial cells.</title>
        <authorList>
            <person name="Wachtler B."/>
            <person name="Wilson D."/>
            <person name="Haedicke K."/>
            <person name="Dalle F."/>
            <person name="Hube B."/>
        </authorList>
    </citation>
    <scope>FUNCTION</scope>
</reference>
<reference key="12">
    <citation type="journal article" date="2012" name="Curr. Biol.">
        <title>Pho85, Pcl1, and Hms1 signaling governs Candida albicans morphogenesis induced by high temperature or Hsp90 compromise.</title>
        <authorList>
            <person name="Shapiro R.S."/>
            <person name="Sellam A."/>
            <person name="Tebbji F."/>
            <person name="Whiteway M."/>
            <person name="Nantel A."/>
            <person name="Cowen L.E."/>
        </authorList>
    </citation>
    <scope>DISRUPTION PHENOTYPE</scope>
</reference>
<reference key="13">
    <citation type="journal article" date="2013" name="J. Investig. Clin. Dent.">
        <title>Secretory products of Escherichia coli biofilm modulate Candida biofilm formation and hyphal development.</title>
        <authorList>
            <person name="Bandara H.M."/>
            <person name="Cheung B.P."/>
            <person name="Watt R.M."/>
            <person name="Jin L.J."/>
            <person name="Samaranayake L.P."/>
        </authorList>
    </citation>
    <scope>INDUCTION</scope>
</reference>
<reference key="14">
    <citation type="journal article" date="2013" name="PLoS ONE">
        <title>Effect of tetrandrine against Candida albicans biofilms.</title>
        <authorList>
            <person name="Zhao L.X."/>
            <person name="Li D.D."/>
            <person name="Hu D.D."/>
            <person name="Hu G.H."/>
            <person name="Yan L."/>
            <person name="Wang Y."/>
            <person name="Jiang Y.Y."/>
        </authorList>
    </citation>
    <scope>INDUCTION</scope>
</reference>
<feature type="chain" id="PRO_0000425613" description="Transcription factor CPH2">
    <location>
        <begin position="1"/>
        <end position="853"/>
    </location>
</feature>
<feature type="domain" description="bHLH" evidence="1">
    <location>
        <begin position="205"/>
        <end position="274"/>
    </location>
</feature>
<feature type="region of interest" description="Disordered" evidence="2">
    <location>
        <begin position="165"/>
        <end position="209"/>
    </location>
</feature>
<feature type="region of interest" description="Disordered" evidence="2">
    <location>
        <begin position="296"/>
        <end position="353"/>
    </location>
</feature>
<feature type="compositionally biased region" description="Low complexity" evidence="2">
    <location>
        <begin position="180"/>
        <end position="194"/>
    </location>
</feature>
<feature type="compositionally biased region" description="Pro residues" evidence="2">
    <location>
        <begin position="301"/>
        <end position="315"/>
    </location>
</feature>
<feature type="compositionally biased region" description="Low complexity" evidence="2">
    <location>
        <begin position="330"/>
        <end position="352"/>
    </location>
</feature>
<evidence type="ECO:0000255" key="1">
    <source>
        <dbReference type="PROSITE-ProRule" id="PRU00981"/>
    </source>
</evidence>
<evidence type="ECO:0000256" key="2">
    <source>
        <dbReference type="SAM" id="MobiDB-lite"/>
    </source>
</evidence>
<evidence type="ECO:0000269" key="3">
    <source>
    </source>
</evidence>
<evidence type="ECO:0000269" key="4">
    <source>
    </source>
</evidence>
<evidence type="ECO:0000269" key="5">
    <source>
    </source>
</evidence>
<evidence type="ECO:0000269" key="6">
    <source>
    </source>
</evidence>
<evidence type="ECO:0000269" key="7">
    <source>
    </source>
</evidence>
<evidence type="ECO:0000269" key="8">
    <source>
    </source>
</evidence>
<evidence type="ECO:0000269" key="9">
    <source>
    </source>
</evidence>
<evidence type="ECO:0000269" key="10">
    <source>
    </source>
</evidence>
<evidence type="ECO:0000269" key="11">
    <source>
    </source>
</evidence>
<evidence type="ECO:0000269" key="12">
    <source>
    </source>
</evidence>
<evidence type="ECO:0000269" key="13">
    <source>
    </source>
</evidence>
<name>CPH2_CANAL</name>
<comment type="function">
    <text evidence="3 4 5 7 8 10">Transcription factor that positively controls filamentous growth, virulence, and invasiveness. Binds directly to the two SRE-1-like elements upstream of TEC1 and thus positively regulates expression of this important hyphal growth regulator. Functions independently of known signaling cascades involving EFG1. Also regulates gene expression during intestinal colonization but is not involved in host cell adhesion.</text>
</comment>
<comment type="subcellular location">
    <subcellularLocation>
        <location>Nucleus</location>
    </subcellularLocation>
</comment>
<comment type="induction">
    <text evidence="6 7 8 9 12 13">Up-regulated during the yeast-to-hypha transition and in virulent strains during intestinal colonization. Also induced upon exposure to fluconazole. Expression is down-regulated by tetrandrine and by Escherichia coli biofilm secretory products.</text>
</comment>
<comment type="disruption phenotype">
    <text evidence="3 4 11">Impairs expression of hypha-specific transcripts and leads to a medium-specific impairment in hyphal development.</text>
</comment>
<dbReference type="EMBL" id="CP017628">
    <property type="protein sequence ID" value="AOW29977.1"/>
    <property type="molecule type" value="Genomic_DNA"/>
</dbReference>
<dbReference type="RefSeq" id="XP_712305.1">
    <property type="nucleotide sequence ID" value="XM_707212.2"/>
</dbReference>
<dbReference type="SMR" id="Q59RL7"/>
<dbReference type="STRING" id="237561.Q59RL7"/>
<dbReference type="EnsemblFungi" id="C6_00280W_A-T">
    <property type="protein sequence ID" value="C6_00280W_A-T-p1"/>
    <property type="gene ID" value="C6_00280W_A"/>
</dbReference>
<dbReference type="GeneID" id="3646067"/>
<dbReference type="KEGG" id="cal:CAALFM_C600280WA"/>
<dbReference type="CGD" id="CAL0000181382">
    <property type="gene designation" value="CPH2"/>
</dbReference>
<dbReference type="VEuPathDB" id="FungiDB:C6_00280W_A"/>
<dbReference type="HOGENOM" id="CLU_017043_0_0_1"/>
<dbReference type="InParanoid" id="Q59RL7"/>
<dbReference type="OrthoDB" id="2133190at2759"/>
<dbReference type="PHI-base" id="PHI:2861"/>
<dbReference type="PRO" id="PR:Q59RL7"/>
<dbReference type="Proteomes" id="UP000000559">
    <property type="component" value="Chromosome 6"/>
</dbReference>
<dbReference type="GO" id="GO:0000785">
    <property type="term" value="C:chromatin"/>
    <property type="evidence" value="ECO:0000318"/>
    <property type="project" value="GO_Central"/>
</dbReference>
<dbReference type="GO" id="GO:0016020">
    <property type="term" value="C:membrane"/>
    <property type="evidence" value="ECO:0000314"/>
    <property type="project" value="CGD"/>
</dbReference>
<dbReference type="GO" id="GO:0005634">
    <property type="term" value="C:nucleus"/>
    <property type="evidence" value="ECO:0000314"/>
    <property type="project" value="CGD"/>
</dbReference>
<dbReference type="GO" id="GO:0001216">
    <property type="term" value="F:DNA-binding transcription activator activity"/>
    <property type="evidence" value="ECO:0000315"/>
    <property type="project" value="CGD"/>
</dbReference>
<dbReference type="GO" id="GO:0003700">
    <property type="term" value="F:DNA-binding transcription factor activity"/>
    <property type="evidence" value="ECO:0000315"/>
    <property type="project" value="CGD"/>
</dbReference>
<dbReference type="GO" id="GO:0003690">
    <property type="term" value="F:double-stranded DNA binding"/>
    <property type="evidence" value="ECO:0000314"/>
    <property type="project" value="CGD"/>
</dbReference>
<dbReference type="GO" id="GO:0046983">
    <property type="term" value="F:protein dimerization activity"/>
    <property type="evidence" value="ECO:0007669"/>
    <property type="project" value="InterPro"/>
</dbReference>
<dbReference type="GO" id="GO:0000978">
    <property type="term" value="F:RNA polymerase II cis-regulatory region sequence-specific DNA binding"/>
    <property type="evidence" value="ECO:0000318"/>
    <property type="project" value="GO_Central"/>
</dbReference>
<dbReference type="GO" id="GO:0044403">
    <property type="term" value="P:biological process involved in symbiotic interaction"/>
    <property type="evidence" value="ECO:0000315"/>
    <property type="project" value="CGD"/>
</dbReference>
<dbReference type="GO" id="GO:0071280">
    <property type="term" value="P:cellular response to copper ion"/>
    <property type="evidence" value="ECO:0000315"/>
    <property type="project" value="CGD"/>
</dbReference>
<dbReference type="GO" id="GO:0034605">
    <property type="term" value="P:cellular response to heat"/>
    <property type="evidence" value="ECO:0000315"/>
    <property type="project" value="CGD"/>
</dbReference>
<dbReference type="GO" id="GO:0036244">
    <property type="term" value="P:cellular response to neutral pH"/>
    <property type="evidence" value="ECO:0000315"/>
    <property type="project" value="CGD"/>
</dbReference>
<dbReference type="GO" id="GO:0030447">
    <property type="term" value="P:filamentous growth"/>
    <property type="evidence" value="ECO:0000315"/>
    <property type="project" value="CGD"/>
</dbReference>
<dbReference type="GO" id="GO:0044182">
    <property type="term" value="P:filamentous growth of a population of unicellular organisms"/>
    <property type="evidence" value="ECO:0000315"/>
    <property type="project" value="CGD"/>
</dbReference>
<dbReference type="GO" id="GO:0036180">
    <property type="term" value="P:filamentous growth of a population of unicellular organisms in response to biotic stimulus"/>
    <property type="evidence" value="ECO:0000315"/>
    <property type="project" value="CGD"/>
</dbReference>
<dbReference type="GO" id="GO:0036171">
    <property type="term" value="P:filamentous growth of a population of unicellular organisms in response to chemical stimulus"/>
    <property type="evidence" value="ECO:0000315"/>
    <property type="project" value="CGD"/>
</dbReference>
<dbReference type="GO" id="GO:0036178">
    <property type="term" value="P:filamentous growth of a population of unicellular organisms in response to neutral pH"/>
    <property type="evidence" value="ECO:0000315"/>
    <property type="project" value="CGD"/>
</dbReference>
<dbReference type="GO" id="GO:1900430">
    <property type="term" value="P:positive regulation of filamentous growth of a population of unicellular organisms"/>
    <property type="evidence" value="ECO:0000315"/>
    <property type="project" value="CGD"/>
</dbReference>
<dbReference type="GO" id="GO:1900445">
    <property type="term" value="P:positive regulation of filamentous growth of a population of unicellular organisms in response to biotic stimulus"/>
    <property type="evidence" value="ECO:0000315"/>
    <property type="project" value="CGD"/>
</dbReference>
<dbReference type="GO" id="GO:1900439">
    <property type="term" value="P:positive regulation of filamentous growth of a population of unicellular organisms in response to chemical stimulus"/>
    <property type="evidence" value="ECO:0000315"/>
    <property type="project" value="CGD"/>
</dbReference>
<dbReference type="GO" id="GO:1900442">
    <property type="term" value="P:positive regulation of filamentous growth of a population of unicellular organisms in response to neutral pH"/>
    <property type="evidence" value="ECO:0000315"/>
    <property type="project" value="CGD"/>
</dbReference>
<dbReference type="GO" id="GO:0045944">
    <property type="term" value="P:positive regulation of transcription by RNA polymerase II"/>
    <property type="evidence" value="ECO:0000315"/>
    <property type="project" value="CGD"/>
</dbReference>
<dbReference type="GO" id="GO:0006355">
    <property type="term" value="P:regulation of DNA-templated transcription"/>
    <property type="evidence" value="ECO:0000315"/>
    <property type="project" value="CGD"/>
</dbReference>
<dbReference type="GO" id="GO:0006357">
    <property type="term" value="P:regulation of transcription by RNA polymerase II"/>
    <property type="evidence" value="ECO:0000315"/>
    <property type="project" value="CGD"/>
</dbReference>
<dbReference type="FunFam" id="4.10.280.10:FF:000116">
    <property type="entry name" value="Putative HLH transcription factor"/>
    <property type="match status" value="1"/>
</dbReference>
<dbReference type="Gene3D" id="4.10.280.10">
    <property type="entry name" value="Helix-loop-helix DNA-binding domain"/>
    <property type="match status" value="1"/>
</dbReference>
<dbReference type="InterPro" id="IPR011598">
    <property type="entry name" value="bHLH_dom"/>
</dbReference>
<dbReference type="InterPro" id="IPR036638">
    <property type="entry name" value="HLH_DNA-bd_sf"/>
</dbReference>
<dbReference type="InterPro" id="IPR052099">
    <property type="entry name" value="Regulatory_TF_Diverse"/>
</dbReference>
<dbReference type="PANTHER" id="PTHR47336">
    <property type="entry name" value="TRANSCRIPTION FACTOR HMS1-RELATED"/>
    <property type="match status" value="1"/>
</dbReference>
<dbReference type="PANTHER" id="PTHR47336:SF2">
    <property type="entry name" value="TRANSCRIPTION FACTOR HMS1-RELATED"/>
    <property type="match status" value="1"/>
</dbReference>
<dbReference type="Pfam" id="PF00010">
    <property type="entry name" value="HLH"/>
    <property type="match status" value="1"/>
</dbReference>
<dbReference type="SMART" id="SM00353">
    <property type="entry name" value="HLH"/>
    <property type="match status" value="1"/>
</dbReference>
<dbReference type="SUPFAM" id="SSF47459">
    <property type="entry name" value="HLH, helix-loop-helix DNA-binding domain"/>
    <property type="match status" value="1"/>
</dbReference>
<dbReference type="PROSITE" id="PS50888">
    <property type="entry name" value="BHLH"/>
    <property type="match status" value="1"/>
</dbReference>
<proteinExistence type="evidence at protein level"/>
<sequence length="853" mass="96046">MLSQYDEQLAAGDNNGFNKQGNATLYSFDFVDADDFLDSISGALPNNGHNNVNPNTNDISFEDMNIMNPNIYSPVSAASGDDFTQSSGQPMISEGSNYTGQNFTDYLSDNSLEGYDKNTSRPLHEVDIGFSNKRSNSTSTGSLSHNEEITPISHYSVDSIVTSPEPPINKQGDFPPIKRTTTVSSTNSITNTTKKPAKVTKPKSKDKNSHNMIEKKYRTNINTKILALRDAVPALRIAAGCDDVSIADLEGLTPASKLNKASVLTKATEYIKHLESKNFILKQQNIELHRLIQHANMNPKSLPPPPQQMQAPPQPGFGFYPPQNQSFNVTPASQYPSPQQQVSPTQQQTVHHPPQPNRYLLGGMAAVMGTSLFGGSGENDFRSLSALPFSYLFPNAILNPSPLTIQLWTLTKVLLVVGSLASIFIPMYKQAQLKKEDKPNTIPETSLLDWILISIGFKTPAKLSVSKRDAIISNLQGGNDWSQLVSDYFYLAGCEINFENCFLSLVLGTIIRHRFPVVATILNHYLSMKEALLLNLDYKGFSKSLIRLNQLISKVDGVSIFESTNLTTRLTNVFTNNRINANIVDGQNHVKYIEFYQRNINDYYAIVFNWRLLEFIHELNVTYLEQLNDDQSQVLTDLKIIEAFFGEQDNKLFGYYQLFTSILNANYAPYLFESLKDKVESSLEKFRIAYEGIDLTDHEIHNTSSEDEYEQESPVVYKYEPTLKSQKSLISSLNLVNEEEFIILTCSLTIYYYKNKEYDRALKLLNYLRLDNDSKTLSLLTFTSLITLINELIPGKIEDNVNLDSAIRICRDWLENPDLTQYMDEDIKLELKKIVVTKGMIVNGIDVNESDEE</sequence>
<protein>
    <recommendedName>
        <fullName>Transcription factor CPH2</fullName>
    </recommendedName>
    <alternativeName>
        <fullName>Candida pseudohyphal regulator 2</fullName>
    </alternativeName>
</protein>
<accession>Q59RL7</accession>
<accession>A0A1D8PPB5</accession>
<accession>Q59S18</accession>
<gene>
    <name type="primary">CPH2</name>
    <name type="ordered locus">CAALFM_C600280WA</name>
    <name type="ORF">CaO19.1187</name>
    <name type="ORF">CaO19.8778</name>
</gene>
<keyword id="KW-0238">DNA-binding</keyword>
<keyword id="KW-0539">Nucleus</keyword>
<keyword id="KW-1185">Reference proteome</keyword>
<keyword id="KW-0804">Transcription</keyword>
<keyword id="KW-0805">Transcription regulation</keyword>